<comment type="function">
    <text evidence="1">One of the essential components for the initiation of protein synthesis. Stabilizes the binding of IF-2 and IF-3 on the 30S subunit to which N-formylmethionyl-tRNA(fMet) subsequently binds. Helps modulate mRNA selection, yielding the 30S pre-initiation complex (PIC). Upon addition of the 50S ribosomal subunit IF-1, IF-2 and IF-3 are released leaving the mature 70S translation initiation complex.</text>
</comment>
<comment type="subunit">
    <text evidence="1">Component of the 30S ribosomal translation pre-initiation complex which assembles on the 30S ribosome in the order IF-2 and IF-3, IF-1 and N-formylmethionyl-tRNA(fMet); mRNA recruitment can occur at any time during PIC assembly.</text>
</comment>
<comment type="subcellular location">
    <subcellularLocation>
        <location evidence="1">Cytoplasm</location>
    </subcellularLocation>
</comment>
<comment type="similarity">
    <text evidence="1">Belongs to the IF-1 family.</text>
</comment>
<organism>
    <name type="scientific">Mycobacterium sp. (strain MCS)</name>
    <dbReference type="NCBI Taxonomy" id="164756"/>
    <lineage>
        <taxon>Bacteria</taxon>
        <taxon>Bacillati</taxon>
        <taxon>Actinomycetota</taxon>
        <taxon>Actinomycetes</taxon>
        <taxon>Mycobacteriales</taxon>
        <taxon>Mycobacteriaceae</taxon>
        <taxon>Mycobacterium</taxon>
    </lineage>
</organism>
<dbReference type="EMBL" id="CP000384">
    <property type="protein sequence ID" value="ABG07221.1"/>
    <property type="molecule type" value="Genomic_DNA"/>
</dbReference>
<dbReference type="SMR" id="Q1BD13"/>
<dbReference type="KEGG" id="mmc:Mmcs_1108"/>
<dbReference type="HOGENOM" id="CLU_151267_1_0_11"/>
<dbReference type="BioCyc" id="MSP164756:G1G6O-1134-MONOMER"/>
<dbReference type="GO" id="GO:0005829">
    <property type="term" value="C:cytosol"/>
    <property type="evidence" value="ECO:0007669"/>
    <property type="project" value="TreeGrafter"/>
</dbReference>
<dbReference type="GO" id="GO:0043022">
    <property type="term" value="F:ribosome binding"/>
    <property type="evidence" value="ECO:0007669"/>
    <property type="project" value="UniProtKB-UniRule"/>
</dbReference>
<dbReference type="GO" id="GO:0019843">
    <property type="term" value="F:rRNA binding"/>
    <property type="evidence" value="ECO:0007669"/>
    <property type="project" value="UniProtKB-UniRule"/>
</dbReference>
<dbReference type="GO" id="GO:0003743">
    <property type="term" value="F:translation initiation factor activity"/>
    <property type="evidence" value="ECO:0007669"/>
    <property type="project" value="UniProtKB-UniRule"/>
</dbReference>
<dbReference type="CDD" id="cd04451">
    <property type="entry name" value="S1_IF1"/>
    <property type="match status" value="1"/>
</dbReference>
<dbReference type="FunFam" id="2.40.50.140:FF:000002">
    <property type="entry name" value="Translation initiation factor IF-1"/>
    <property type="match status" value="1"/>
</dbReference>
<dbReference type="Gene3D" id="2.40.50.140">
    <property type="entry name" value="Nucleic acid-binding proteins"/>
    <property type="match status" value="1"/>
</dbReference>
<dbReference type="HAMAP" id="MF_00075">
    <property type="entry name" value="IF_1"/>
    <property type="match status" value="1"/>
</dbReference>
<dbReference type="InterPro" id="IPR012340">
    <property type="entry name" value="NA-bd_OB-fold"/>
</dbReference>
<dbReference type="InterPro" id="IPR006196">
    <property type="entry name" value="RNA-binding_domain_S1_IF1"/>
</dbReference>
<dbReference type="InterPro" id="IPR004368">
    <property type="entry name" value="TIF_IF1"/>
</dbReference>
<dbReference type="NCBIfam" id="TIGR00008">
    <property type="entry name" value="infA"/>
    <property type="match status" value="1"/>
</dbReference>
<dbReference type="PANTHER" id="PTHR33370">
    <property type="entry name" value="TRANSLATION INITIATION FACTOR IF-1, CHLOROPLASTIC"/>
    <property type="match status" value="1"/>
</dbReference>
<dbReference type="PANTHER" id="PTHR33370:SF1">
    <property type="entry name" value="TRANSLATION INITIATION FACTOR IF-1, CHLOROPLASTIC"/>
    <property type="match status" value="1"/>
</dbReference>
<dbReference type="Pfam" id="PF01176">
    <property type="entry name" value="eIF-1a"/>
    <property type="match status" value="1"/>
</dbReference>
<dbReference type="SUPFAM" id="SSF50249">
    <property type="entry name" value="Nucleic acid-binding proteins"/>
    <property type="match status" value="1"/>
</dbReference>
<dbReference type="PROSITE" id="PS50832">
    <property type="entry name" value="S1_IF1_TYPE"/>
    <property type="match status" value="1"/>
</dbReference>
<accession>Q1BD13</accession>
<feature type="chain" id="PRO_0000263822" description="Translation initiation factor IF-1">
    <location>
        <begin position="1"/>
        <end position="73"/>
    </location>
</feature>
<feature type="domain" description="S1-like" evidence="1">
    <location>
        <begin position="1"/>
        <end position="73"/>
    </location>
</feature>
<keyword id="KW-0963">Cytoplasm</keyword>
<keyword id="KW-0396">Initiation factor</keyword>
<keyword id="KW-0648">Protein biosynthesis</keyword>
<keyword id="KW-0694">RNA-binding</keyword>
<keyword id="KW-0699">rRNA-binding</keyword>
<reference key="1">
    <citation type="submission" date="2006-06" db="EMBL/GenBank/DDBJ databases">
        <title>Complete sequence of chromosome of Mycobacterium sp. MCS.</title>
        <authorList>
            <consortium name="US DOE Joint Genome Institute"/>
            <person name="Copeland A."/>
            <person name="Lucas S."/>
            <person name="Lapidus A."/>
            <person name="Barry K."/>
            <person name="Detter J.C."/>
            <person name="Glavina del Rio T."/>
            <person name="Hammon N."/>
            <person name="Israni S."/>
            <person name="Dalin E."/>
            <person name="Tice H."/>
            <person name="Pitluck S."/>
            <person name="Martinez M."/>
            <person name="Schmutz J."/>
            <person name="Larimer F."/>
            <person name="Land M."/>
            <person name="Hauser L."/>
            <person name="Kyrpides N."/>
            <person name="Kim E."/>
            <person name="Miller C.D."/>
            <person name="Hughes J.E."/>
            <person name="Anderson A.J."/>
            <person name="Sims R.C."/>
            <person name="Richardson P."/>
        </authorList>
    </citation>
    <scope>NUCLEOTIDE SEQUENCE [LARGE SCALE GENOMIC DNA]</scope>
    <source>
        <strain>MCS</strain>
    </source>
</reference>
<gene>
    <name evidence="1" type="primary">infA</name>
    <name type="ordered locus">Mmcs_1108</name>
</gene>
<protein>
    <recommendedName>
        <fullName evidence="1">Translation initiation factor IF-1</fullName>
    </recommendedName>
</protein>
<evidence type="ECO:0000255" key="1">
    <source>
        <dbReference type="HAMAP-Rule" id="MF_00075"/>
    </source>
</evidence>
<sequence length="73" mass="8489">MAKKDGAIEVEGRVVEPLPNAMFRIELENGHKVLAHISGKMRQHYIRILPEDRVVVELSPYDLSRGRIVYRYK</sequence>
<proteinExistence type="inferred from homology"/>
<name>IF1_MYCSS</name>